<gene>
    <name evidence="1" type="primary">mraY</name>
    <name type="ordered locus">CHAB381_1594</name>
</gene>
<organism>
    <name type="scientific">Campylobacter hominis (strain ATCC BAA-381 / DSM 21671 / CCUG 45161 / LMG 19568 / NCTC 13146 / CH001A)</name>
    <dbReference type="NCBI Taxonomy" id="360107"/>
    <lineage>
        <taxon>Bacteria</taxon>
        <taxon>Pseudomonadati</taxon>
        <taxon>Campylobacterota</taxon>
        <taxon>Epsilonproteobacteria</taxon>
        <taxon>Campylobacterales</taxon>
        <taxon>Campylobacteraceae</taxon>
        <taxon>Campylobacter</taxon>
    </lineage>
</organism>
<keyword id="KW-0131">Cell cycle</keyword>
<keyword id="KW-0132">Cell division</keyword>
<keyword id="KW-0997">Cell inner membrane</keyword>
<keyword id="KW-1003">Cell membrane</keyword>
<keyword id="KW-0133">Cell shape</keyword>
<keyword id="KW-0961">Cell wall biogenesis/degradation</keyword>
<keyword id="KW-0460">Magnesium</keyword>
<keyword id="KW-0472">Membrane</keyword>
<keyword id="KW-0479">Metal-binding</keyword>
<keyword id="KW-0573">Peptidoglycan synthesis</keyword>
<keyword id="KW-1185">Reference proteome</keyword>
<keyword id="KW-0808">Transferase</keyword>
<keyword id="KW-0812">Transmembrane</keyword>
<keyword id="KW-1133">Transmembrane helix</keyword>
<reference key="1">
    <citation type="submission" date="2007-07" db="EMBL/GenBank/DDBJ databases">
        <title>Complete genome sequence of Campylobacter hominis ATCC BAA-381, a commensal isolated from the human gastrointestinal tract.</title>
        <authorList>
            <person name="Fouts D.E."/>
            <person name="Mongodin E.F."/>
            <person name="Puiu D."/>
            <person name="Sebastian Y."/>
            <person name="Miller W.G."/>
            <person name="Mandrell R.E."/>
            <person name="Nelson K.E."/>
        </authorList>
    </citation>
    <scope>NUCLEOTIDE SEQUENCE [LARGE SCALE GENOMIC DNA]</scope>
    <source>
        <strain>ATCC BAA-381 / DSM 21671 / CCUG 45161 / LMG 19568 / NCTC 13146 / CH001A</strain>
    </source>
</reference>
<protein>
    <recommendedName>
        <fullName evidence="1">Phospho-N-acetylmuramoyl-pentapeptide-transferase</fullName>
        <ecNumber evidence="1">2.7.8.13</ecNumber>
    </recommendedName>
    <alternativeName>
        <fullName evidence="1">UDP-MurNAc-pentapeptide phosphotransferase</fullName>
    </alternativeName>
</protein>
<accession>A7I3M7</accession>
<name>MRAY_CAMHC</name>
<dbReference type="EC" id="2.7.8.13" evidence="1"/>
<dbReference type="EMBL" id="CP000776">
    <property type="protein sequence ID" value="ABS51312.1"/>
    <property type="molecule type" value="Genomic_DNA"/>
</dbReference>
<dbReference type="RefSeq" id="WP_012109423.1">
    <property type="nucleotide sequence ID" value="NC_009714.1"/>
</dbReference>
<dbReference type="SMR" id="A7I3M7"/>
<dbReference type="STRING" id="360107.CHAB381_1594"/>
<dbReference type="KEGG" id="cha:CHAB381_1594"/>
<dbReference type="eggNOG" id="COG0472">
    <property type="taxonomic scope" value="Bacteria"/>
</dbReference>
<dbReference type="HOGENOM" id="CLU_023982_0_0_7"/>
<dbReference type="OrthoDB" id="9805475at2"/>
<dbReference type="UniPathway" id="UPA00219"/>
<dbReference type="Proteomes" id="UP000002407">
    <property type="component" value="Chromosome"/>
</dbReference>
<dbReference type="GO" id="GO:0005886">
    <property type="term" value="C:plasma membrane"/>
    <property type="evidence" value="ECO:0007669"/>
    <property type="project" value="UniProtKB-SubCell"/>
</dbReference>
<dbReference type="GO" id="GO:0046872">
    <property type="term" value="F:metal ion binding"/>
    <property type="evidence" value="ECO:0007669"/>
    <property type="project" value="UniProtKB-KW"/>
</dbReference>
<dbReference type="GO" id="GO:0008963">
    <property type="term" value="F:phospho-N-acetylmuramoyl-pentapeptide-transferase activity"/>
    <property type="evidence" value="ECO:0007669"/>
    <property type="project" value="UniProtKB-UniRule"/>
</dbReference>
<dbReference type="GO" id="GO:0051992">
    <property type="term" value="F:UDP-N-acetylmuramoyl-L-alanyl-D-glutamyl-meso-2,6-diaminopimelyl-D-alanyl-D-alanine:undecaprenyl-phosphate transferase activity"/>
    <property type="evidence" value="ECO:0007669"/>
    <property type="project" value="RHEA"/>
</dbReference>
<dbReference type="GO" id="GO:0051301">
    <property type="term" value="P:cell division"/>
    <property type="evidence" value="ECO:0007669"/>
    <property type="project" value="UniProtKB-KW"/>
</dbReference>
<dbReference type="GO" id="GO:0071555">
    <property type="term" value="P:cell wall organization"/>
    <property type="evidence" value="ECO:0007669"/>
    <property type="project" value="UniProtKB-KW"/>
</dbReference>
<dbReference type="GO" id="GO:0009252">
    <property type="term" value="P:peptidoglycan biosynthetic process"/>
    <property type="evidence" value="ECO:0007669"/>
    <property type="project" value="UniProtKB-UniRule"/>
</dbReference>
<dbReference type="GO" id="GO:0008360">
    <property type="term" value="P:regulation of cell shape"/>
    <property type="evidence" value="ECO:0007669"/>
    <property type="project" value="UniProtKB-KW"/>
</dbReference>
<dbReference type="CDD" id="cd06852">
    <property type="entry name" value="GT_MraY"/>
    <property type="match status" value="1"/>
</dbReference>
<dbReference type="HAMAP" id="MF_00038">
    <property type="entry name" value="MraY"/>
    <property type="match status" value="1"/>
</dbReference>
<dbReference type="InterPro" id="IPR000715">
    <property type="entry name" value="Glycosyl_transferase_4"/>
</dbReference>
<dbReference type="InterPro" id="IPR003524">
    <property type="entry name" value="PNAcMuramoyl-5peptid_Trfase"/>
</dbReference>
<dbReference type="InterPro" id="IPR018480">
    <property type="entry name" value="PNAcMuramoyl-5peptid_Trfase_CS"/>
</dbReference>
<dbReference type="NCBIfam" id="TIGR00445">
    <property type="entry name" value="mraY"/>
    <property type="match status" value="1"/>
</dbReference>
<dbReference type="PANTHER" id="PTHR22926">
    <property type="entry name" value="PHOSPHO-N-ACETYLMURAMOYL-PENTAPEPTIDE-TRANSFERASE"/>
    <property type="match status" value="1"/>
</dbReference>
<dbReference type="PANTHER" id="PTHR22926:SF5">
    <property type="entry name" value="PHOSPHO-N-ACETYLMURAMOYL-PENTAPEPTIDE-TRANSFERASE HOMOLOG"/>
    <property type="match status" value="1"/>
</dbReference>
<dbReference type="Pfam" id="PF00953">
    <property type="entry name" value="Glycos_transf_4"/>
    <property type="match status" value="1"/>
</dbReference>
<dbReference type="Pfam" id="PF10555">
    <property type="entry name" value="MraY_sig1"/>
    <property type="match status" value="1"/>
</dbReference>
<dbReference type="PROSITE" id="PS01347">
    <property type="entry name" value="MRAY_1"/>
    <property type="match status" value="1"/>
</dbReference>
<dbReference type="PROSITE" id="PS01348">
    <property type="entry name" value="MRAY_2"/>
    <property type="match status" value="1"/>
</dbReference>
<comment type="function">
    <text evidence="1">Catalyzes the initial step of the lipid cycle reactions in the biosynthesis of the cell wall peptidoglycan: transfers peptidoglycan precursor phospho-MurNAc-pentapeptide from UDP-MurNAc-pentapeptide onto the lipid carrier undecaprenyl phosphate, yielding undecaprenyl-pyrophosphoryl-MurNAc-pentapeptide, known as lipid I.</text>
</comment>
<comment type="catalytic activity">
    <reaction evidence="1">
        <text>UDP-N-acetyl-alpha-D-muramoyl-L-alanyl-gamma-D-glutamyl-meso-2,6-diaminopimeloyl-D-alanyl-D-alanine + di-trans,octa-cis-undecaprenyl phosphate = di-trans,octa-cis-undecaprenyl diphospho-N-acetyl-alpha-D-muramoyl-L-alanyl-D-glutamyl-meso-2,6-diaminopimeloyl-D-alanyl-D-alanine + UMP</text>
        <dbReference type="Rhea" id="RHEA:28386"/>
        <dbReference type="ChEBI" id="CHEBI:57865"/>
        <dbReference type="ChEBI" id="CHEBI:60392"/>
        <dbReference type="ChEBI" id="CHEBI:61386"/>
        <dbReference type="ChEBI" id="CHEBI:61387"/>
        <dbReference type="EC" id="2.7.8.13"/>
    </reaction>
</comment>
<comment type="cofactor">
    <cofactor evidence="1">
        <name>Mg(2+)</name>
        <dbReference type="ChEBI" id="CHEBI:18420"/>
    </cofactor>
</comment>
<comment type="pathway">
    <text evidence="1">Cell wall biogenesis; peptidoglycan biosynthesis.</text>
</comment>
<comment type="subcellular location">
    <subcellularLocation>
        <location evidence="1">Cell inner membrane</location>
        <topology evidence="1">Multi-pass membrane protein</topology>
    </subcellularLocation>
</comment>
<comment type="similarity">
    <text evidence="1">Belongs to the glycosyltransferase 4 family. MraY subfamily.</text>
</comment>
<sequence>MLYFLYKILNINILNYITVRAGIAFFAAFFLTAFFMPRFIAWAKNKHANQPIYELAPQSHKAKNKTPTMGGIVFITATLLSSLLCSNLTNTFVIGGILCLFGFSFIGFKDDYGKIAGHSNHAGMSPRKKFMYQIGLSFALSIILFLFANLSGEFFIPFYKYALFNLQFFAIFFWMLVITASSNSVNLTDGLDGLASIPSIFALVSLGIFVYLCGHSVFSAYLFLPKVVGVGELCVVIFALIGAILGFLWYNCYPAQVFMGDSGSLSVGAFIGYTGVVSKNEILLIIIGFVFVIETLSVILQVGSFKIRKKRIFLMAPIHHHFELKGWNENKIIVRFWIIALIANIIALTTLKLR</sequence>
<proteinExistence type="inferred from homology"/>
<evidence type="ECO:0000255" key="1">
    <source>
        <dbReference type="HAMAP-Rule" id="MF_00038"/>
    </source>
</evidence>
<feature type="chain" id="PRO_1000002956" description="Phospho-N-acetylmuramoyl-pentapeptide-transferase">
    <location>
        <begin position="1"/>
        <end position="354"/>
    </location>
</feature>
<feature type="transmembrane region" description="Helical" evidence="1">
    <location>
        <begin position="23"/>
        <end position="43"/>
    </location>
</feature>
<feature type="transmembrane region" description="Helical" evidence="1">
    <location>
        <begin position="66"/>
        <end position="86"/>
    </location>
</feature>
<feature type="transmembrane region" description="Helical" evidence="1">
    <location>
        <begin position="88"/>
        <end position="108"/>
    </location>
</feature>
<feature type="transmembrane region" description="Helical" evidence="1">
    <location>
        <begin position="138"/>
        <end position="158"/>
    </location>
</feature>
<feature type="transmembrane region" description="Helical" evidence="1">
    <location>
        <begin position="161"/>
        <end position="181"/>
    </location>
</feature>
<feature type="transmembrane region" description="Helical" evidence="1">
    <location>
        <begin position="193"/>
        <end position="213"/>
    </location>
</feature>
<feature type="transmembrane region" description="Helical" evidence="1">
    <location>
        <begin position="227"/>
        <end position="247"/>
    </location>
</feature>
<feature type="transmembrane region" description="Helical" evidence="1">
    <location>
        <begin position="257"/>
        <end position="277"/>
    </location>
</feature>
<feature type="transmembrane region" description="Helical" evidence="1">
    <location>
        <begin position="282"/>
        <end position="302"/>
    </location>
</feature>
<feature type="transmembrane region" description="Helical" evidence="1">
    <location>
        <begin position="331"/>
        <end position="351"/>
    </location>
</feature>